<gene>
    <name type="primary">P74</name>
    <name type="ORF">ORF134</name>
</gene>
<organismHost>
    <name type="scientific">Orgyia pseudotsugata</name>
    <name type="common">Douglas-fir tussock moth</name>
    <dbReference type="NCBI Taxonomy" id="33414"/>
</organismHost>
<reference key="1">
    <citation type="journal article" date="1997" name="Virology">
        <title>The sequence of the Orgyia pseudotsugata multinucleocapsid nuclear polyhedrosis virus genome.</title>
        <authorList>
            <person name="Ahrens C.H."/>
            <person name="Russell R.R."/>
            <person name="Funk C.J."/>
            <person name="Evans J."/>
            <person name="Harwood S."/>
            <person name="Rohrmann G.F."/>
        </authorList>
    </citation>
    <scope>NUCLEOTIDE SEQUENCE [LARGE SCALE GENOMIC DNA]</scope>
</reference>
<keyword id="KW-1185">Reference proteome</keyword>
<keyword id="KW-0842">Viral occlusion body</keyword>
<keyword id="KW-0843">Virulence</keyword>
<feature type="chain" id="PRO_0000132917" description="Protein p74">
    <location>
        <begin position="1"/>
        <end position="644"/>
    </location>
</feature>
<dbReference type="EMBL" id="U75930">
    <property type="protein sequence ID" value="AAC59133.1"/>
    <property type="molecule type" value="Genomic_DNA"/>
</dbReference>
<dbReference type="RefSeq" id="NP_046290.1">
    <property type="nucleotide sequence ID" value="NC_001875.2"/>
</dbReference>
<dbReference type="KEGG" id="vg:912105"/>
<dbReference type="OrthoDB" id="2848at10239"/>
<dbReference type="Proteomes" id="UP000009248">
    <property type="component" value="Genome"/>
</dbReference>
<dbReference type="GO" id="GO:0039679">
    <property type="term" value="C:viral occlusion body"/>
    <property type="evidence" value="ECO:0007669"/>
    <property type="project" value="UniProtKB-KW"/>
</dbReference>
<dbReference type="GO" id="GO:0019058">
    <property type="term" value="P:viral life cycle"/>
    <property type="evidence" value="ECO:0007669"/>
    <property type="project" value="InterPro"/>
</dbReference>
<dbReference type="InterPro" id="IPR007663">
    <property type="entry name" value="Baculo_p74"/>
</dbReference>
<dbReference type="InterPro" id="IPR013613">
    <property type="entry name" value="Baculo_p74_N"/>
</dbReference>
<dbReference type="Pfam" id="PF04583">
    <property type="entry name" value="Baculo_p74"/>
    <property type="match status" value="1"/>
</dbReference>
<dbReference type="Pfam" id="PF08404">
    <property type="entry name" value="Baculo_p74_N"/>
    <property type="match status" value="1"/>
</dbReference>
<accession>O10365</accession>
<comment type="function">
    <text evidence="1">Essential for virulence of baculovirus occlusion bodies for insect larvae.</text>
</comment>
<comment type="similarity">
    <text evidence="2">Belongs to the baculoviridae p74 family.</text>
</comment>
<proteinExistence type="inferred from homology"/>
<protein>
    <recommendedName>
        <fullName>Protein p74</fullName>
    </recommendedName>
</protein>
<evidence type="ECO:0000250" key="1"/>
<evidence type="ECO:0000305" key="2"/>
<name>VP74_NPVOP</name>
<sequence length="644" mass="72654">MAVLTAVDLTNASRYAGHMHRLEFINRWRERLPHILIDYTLRPASSDDDYYVPPNLRNRALAVKLAFSRRGCDSMSCFPFHETGVVSSQTPFAYTQTSETSVAYAQPACYHLDRAAAMREGAENEVQSAEFTYTPNNQCVLVDSTSKMYFNSPYLRTEEHTIMGVDDVPAFNVRPDPDPLFPERFKGEFNEAYCRRFGRDLINGGCSFRWWESLIGFVLGDTIYVTFKMLANNIFSELRDFDYAAPSPLLPPRPAADSNAVLAQWRAVRDRAVDWDFEKQFSEAPTLQQLGMDANGVLMQLSYTAETGFTKTPIAYSARGAVRVARESRAADRAMSDDDLEAIVASFLEEYALVFGIATDIGFDMLLTAFKAMLKKINTALIPALKRMLVGTSQRVTVRLLGETYKAALVHSMNRIAIKTLTTAAKALTRVAIKASSVVGIVLILFTLADLVLALWDPFGYNNMFPREFPDDLSRTFLTAYFETLDSNTSREIIEFLPEFFADIVETDDDATFQSLFHLLDYVAALEVNSDGQMLALDESDEIKDFDEATLVGQALASSSLYTRLEFMQYTYRQNTLLAMNKNNNKLNGVIAGLFLTNTAVALAAFIAHKELTFFVYFAIFLMLAFYYLVKEPYEYFKTVDLLF</sequence>
<organism>
    <name type="scientific">Orgyia pseudotsugata multicapsid polyhedrosis virus</name>
    <name type="common">OpMNPV</name>
    <dbReference type="NCBI Taxonomy" id="262177"/>
    <lineage>
        <taxon>Viruses</taxon>
        <taxon>Viruses incertae sedis</taxon>
        <taxon>Naldaviricetes</taxon>
        <taxon>Lefavirales</taxon>
        <taxon>Baculoviridae</taxon>
        <taxon>Alphabaculovirus</taxon>
        <taxon>Alphabaculovirus orpseudotsugatae</taxon>
    </lineage>
</organism>